<comment type="function">
    <text evidence="1">Hydrolyzes the pyrophosphate bond of UDP-2,3-diacylglucosamine to yield 2,3-diacylglucosamine 1-phosphate (lipid X) and UMP by catalyzing the attack of water at the alpha-P atom. Involved in the biosynthesis of lipid A, a phosphorylated glycolipid that anchors the lipopolysaccharide to the outer membrane of the cell.</text>
</comment>
<comment type="catalytic activity">
    <reaction evidence="1">
        <text>UDP-2-N,3-O-bis[(3R)-3-hydroxytetradecanoyl]-alpha-D-glucosamine + H2O = 2-N,3-O-bis[(3R)-3-hydroxytetradecanoyl]-alpha-D-glucosaminyl 1-phosphate + UMP + 2 H(+)</text>
        <dbReference type="Rhea" id="RHEA:25213"/>
        <dbReference type="ChEBI" id="CHEBI:15377"/>
        <dbReference type="ChEBI" id="CHEBI:15378"/>
        <dbReference type="ChEBI" id="CHEBI:57865"/>
        <dbReference type="ChEBI" id="CHEBI:57957"/>
        <dbReference type="ChEBI" id="CHEBI:78847"/>
        <dbReference type="EC" id="3.6.1.54"/>
    </reaction>
</comment>
<comment type="cofactor">
    <cofactor evidence="1">
        <name>Mn(2+)</name>
        <dbReference type="ChEBI" id="CHEBI:29035"/>
    </cofactor>
    <text evidence="1">Binds 2 Mn(2+) ions per subunit in a binuclear metal center.</text>
</comment>
<comment type="pathway">
    <text evidence="1">Glycolipid biosynthesis; lipid IV(A) biosynthesis; lipid IV(A) from (3R)-3-hydroxytetradecanoyl-[acyl-carrier-protein] and UDP-N-acetyl-alpha-D-glucosamine: step 4/6.</text>
</comment>
<comment type="subcellular location">
    <subcellularLocation>
        <location evidence="1">Cell inner membrane</location>
        <topology evidence="1">Peripheral membrane protein</topology>
        <orientation evidence="1">Cytoplasmic side</orientation>
    </subcellularLocation>
</comment>
<comment type="similarity">
    <text evidence="1">Belongs to the LpxH family.</text>
</comment>
<evidence type="ECO:0000255" key="1">
    <source>
        <dbReference type="HAMAP-Rule" id="MF_00575"/>
    </source>
</evidence>
<dbReference type="EC" id="3.6.1.54" evidence="1"/>
<dbReference type="EMBL" id="CP000436">
    <property type="protein sequence ID" value="ABI24775.1"/>
    <property type="molecule type" value="Genomic_DNA"/>
</dbReference>
<dbReference type="SMR" id="Q0I254"/>
<dbReference type="KEGG" id="hso:HS_0498"/>
<dbReference type="eggNOG" id="COG2908">
    <property type="taxonomic scope" value="Bacteria"/>
</dbReference>
<dbReference type="HOGENOM" id="CLU_074586_0_0_6"/>
<dbReference type="UniPathway" id="UPA00359">
    <property type="reaction ID" value="UER00480"/>
</dbReference>
<dbReference type="GO" id="GO:0005737">
    <property type="term" value="C:cytoplasm"/>
    <property type="evidence" value="ECO:0007669"/>
    <property type="project" value="InterPro"/>
</dbReference>
<dbReference type="GO" id="GO:0019897">
    <property type="term" value="C:extrinsic component of plasma membrane"/>
    <property type="evidence" value="ECO:0007669"/>
    <property type="project" value="UniProtKB-UniRule"/>
</dbReference>
<dbReference type="GO" id="GO:0030145">
    <property type="term" value="F:manganese ion binding"/>
    <property type="evidence" value="ECO:0007669"/>
    <property type="project" value="UniProtKB-UniRule"/>
</dbReference>
<dbReference type="GO" id="GO:0008758">
    <property type="term" value="F:UDP-2,3-diacylglucosamine hydrolase activity"/>
    <property type="evidence" value="ECO:0007669"/>
    <property type="project" value="UniProtKB-UniRule"/>
</dbReference>
<dbReference type="GO" id="GO:0009245">
    <property type="term" value="P:lipid A biosynthetic process"/>
    <property type="evidence" value="ECO:0007669"/>
    <property type="project" value="UniProtKB-UniRule"/>
</dbReference>
<dbReference type="CDD" id="cd07398">
    <property type="entry name" value="MPP_YbbF-LpxH"/>
    <property type="match status" value="1"/>
</dbReference>
<dbReference type="Gene3D" id="3.60.21.10">
    <property type="match status" value="1"/>
</dbReference>
<dbReference type="HAMAP" id="MF_00575">
    <property type="entry name" value="LpxH"/>
    <property type="match status" value="1"/>
</dbReference>
<dbReference type="InterPro" id="IPR004843">
    <property type="entry name" value="Calcineurin-like_PHP_ApaH"/>
</dbReference>
<dbReference type="InterPro" id="IPR043461">
    <property type="entry name" value="LpxH-like"/>
</dbReference>
<dbReference type="InterPro" id="IPR029052">
    <property type="entry name" value="Metallo-depent_PP-like"/>
</dbReference>
<dbReference type="InterPro" id="IPR010138">
    <property type="entry name" value="UDP-diacylglucosamine_Hdrlase"/>
</dbReference>
<dbReference type="NCBIfam" id="TIGR01854">
    <property type="entry name" value="lipid_A_lpxH"/>
    <property type="match status" value="1"/>
</dbReference>
<dbReference type="NCBIfam" id="NF003743">
    <property type="entry name" value="PRK05340.1"/>
    <property type="match status" value="1"/>
</dbReference>
<dbReference type="PANTHER" id="PTHR34990:SF1">
    <property type="entry name" value="UDP-2,3-DIACYLGLUCOSAMINE HYDROLASE"/>
    <property type="match status" value="1"/>
</dbReference>
<dbReference type="PANTHER" id="PTHR34990">
    <property type="entry name" value="UDP-2,3-DIACYLGLUCOSAMINE HYDROLASE-RELATED"/>
    <property type="match status" value="1"/>
</dbReference>
<dbReference type="Pfam" id="PF00149">
    <property type="entry name" value="Metallophos"/>
    <property type="match status" value="1"/>
</dbReference>
<dbReference type="SUPFAM" id="SSF56300">
    <property type="entry name" value="Metallo-dependent phosphatases"/>
    <property type="match status" value="1"/>
</dbReference>
<feature type="chain" id="PRO_1000025058" description="UDP-2,3-diacylglucosamine hydrolase">
    <location>
        <begin position="1"/>
        <end position="234"/>
    </location>
</feature>
<feature type="binding site" evidence="1">
    <location>
        <position position="9"/>
    </location>
    <ligand>
        <name>Mn(2+)</name>
        <dbReference type="ChEBI" id="CHEBI:29035"/>
        <label>1</label>
    </ligand>
</feature>
<feature type="binding site" evidence="1">
    <location>
        <position position="11"/>
    </location>
    <ligand>
        <name>Mn(2+)</name>
        <dbReference type="ChEBI" id="CHEBI:29035"/>
        <label>1</label>
    </ligand>
</feature>
<feature type="binding site" evidence="1">
    <location>
        <position position="42"/>
    </location>
    <ligand>
        <name>Mn(2+)</name>
        <dbReference type="ChEBI" id="CHEBI:29035"/>
        <label>1</label>
    </ligand>
</feature>
<feature type="binding site" evidence="1">
    <location>
        <position position="42"/>
    </location>
    <ligand>
        <name>Mn(2+)</name>
        <dbReference type="ChEBI" id="CHEBI:29035"/>
        <label>2</label>
    </ligand>
</feature>
<feature type="binding site" evidence="1">
    <location>
        <begin position="80"/>
        <end position="81"/>
    </location>
    <ligand>
        <name>substrate</name>
    </ligand>
</feature>
<feature type="binding site" evidence="1">
    <location>
        <position position="80"/>
    </location>
    <ligand>
        <name>Mn(2+)</name>
        <dbReference type="ChEBI" id="CHEBI:29035"/>
        <label>2</label>
    </ligand>
</feature>
<feature type="binding site" evidence="1">
    <location>
        <position position="115"/>
    </location>
    <ligand>
        <name>Mn(2+)</name>
        <dbReference type="ChEBI" id="CHEBI:29035"/>
        <label>2</label>
    </ligand>
</feature>
<feature type="binding site" evidence="1">
    <location>
        <position position="123"/>
    </location>
    <ligand>
        <name>substrate</name>
    </ligand>
</feature>
<feature type="binding site" evidence="1">
    <location>
        <position position="161"/>
    </location>
    <ligand>
        <name>substrate</name>
    </ligand>
</feature>
<feature type="binding site" evidence="1">
    <location>
        <position position="165"/>
    </location>
    <ligand>
        <name>substrate</name>
    </ligand>
</feature>
<feature type="binding site" evidence="1">
    <location>
        <position position="168"/>
    </location>
    <ligand>
        <name>substrate</name>
    </ligand>
</feature>
<feature type="binding site" evidence="1">
    <location>
        <position position="196"/>
    </location>
    <ligand>
        <name>Mn(2+)</name>
        <dbReference type="ChEBI" id="CHEBI:29035"/>
        <label>2</label>
    </ligand>
</feature>
<feature type="binding site" evidence="1">
    <location>
        <position position="196"/>
    </location>
    <ligand>
        <name>substrate</name>
    </ligand>
</feature>
<feature type="binding site" evidence="1">
    <location>
        <position position="198"/>
    </location>
    <ligand>
        <name>Mn(2+)</name>
        <dbReference type="ChEBI" id="CHEBI:29035"/>
        <label>1</label>
    </ligand>
</feature>
<accession>Q0I254</accession>
<sequence length="234" mass="27336">MKKTFFIADLHLSENRPHLTELFVQFMQTQALQAEKLYILGDLFDFWIGDDEQSALIETVQQQILQLSQKGIPCYFIHGNRDFLVGRHFANSCGMELLPTYQIVNLYGKKVLICHGDTLCTDDLAYQQYRKKVQQKWLQWLFLHLPLKVRLKIAEKIRQKSKTDKTHKSIEIMDVNKDFVEQIMQQFQVNILIHGHTHKQNIHQNPPHFTRIVLGDWGATASVLEVSANGFQFI</sequence>
<gene>
    <name evidence="1" type="primary">lpxH</name>
    <name type="ordered locus">HS_0498</name>
</gene>
<reference key="1">
    <citation type="journal article" date="2007" name="J. Bacteriol.">
        <title>Complete genome sequence of Haemophilus somnus (Histophilus somni) strain 129Pt and comparison to Haemophilus ducreyi 35000HP and Haemophilus influenzae Rd.</title>
        <authorList>
            <person name="Challacombe J.F."/>
            <person name="Duncan A.J."/>
            <person name="Brettin T.S."/>
            <person name="Bruce D."/>
            <person name="Chertkov O."/>
            <person name="Detter J.C."/>
            <person name="Han C.S."/>
            <person name="Misra M."/>
            <person name="Richardson P."/>
            <person name="Tapia R."/>
            <person name="Thayer N."/>
            <person name="Xie G."/>
            <person name="Inzana T.J."/>
        </authorList>
    </citation>
    <scope>NUCLEOTIDE SEQUENCE [LARGE SCALE GENOMIC DNA]</scope>
    <source>
        <strain>129Pt</strain>
    </source>
</reference>
<organism>
    <name type="scientific">Histophilus somni (strain 129Pt)</name>
    <name type="common">Haemophilus somnus</name>
    <dbReference type="NCBI Taxonomy" id="205914"/>
    <lineage>
        <taxon>Bacteria</taxon>
        <taxon>Pseudomonadati</taxon>
        <taxon>Pseudomonadota</taxon>
        <taxon>Gammaproteobacteria</taxon>
        <taxon>Pasteurellales</taxon>
        <taxon>Pasteurellaceae</taxon>
        <taxon>Histophilus</taxon>
    </lineage>
</organism>
<protein>
    <recommendedName>
        <fullName evidence="1">UDP-2,3-diacylglucosamine hydrolase</fullName>
        <ecNumber evidence="1">3.6.1.54</ecNumber>
    </recommendedName>
    <alternativeName>
        <fullName evidence="1">UDP-2,3-diacylglucosamine diphosphatase</fullName>
    </alternativeName>
</protein>
<proteinExistence type="inferred from homology"/>
<name>LPXH_HISS1</name>
<keyword id="KW-0997">Cell inner membrane</keyword>
<keyword id="KW-1003">Cell membrane</keyword>
<keyword id="KW-0378">Hydrolase</keyword>
<keyword id="KW-0441">Lipid A biosynthesis</keyword>
<keyword id="KW-0444">Lipid biosynthesis</keyword>
<keyword id="KW-0443">Lipid metabolism</keyword>
<keyword id="KW-0464">Manganese</keyword>
<keyword id="KW-0472">Membrane</keyword>
<keyword id="KW-0479">Metal-binding</keyword>